<dbReference type="EC" id="4.2.1.11" evidence="1"/>
<dbReference type="EMBL" id="CU459141">
    <property type="protein sequence ID" value="CAM86561.1"/>
    <property type="molecule type" value="Genomic_DNA"/>
</dbReference>
<dbReference type="SMR" id="B0V677"/>
<dbReference type="EnsemblBacteria" id="CAM86561">
    <property type="protein sequence ID" value="CAM86561"/>
    <property type="gene ID" value="ABAYE1669"/>
</dbReference>
<dbReference type="KEGG" id="aby:ABAYE1669"/>
<dbReference type="HOGENOM" id="CLU_031223_2_1_6"/>
<dbReference type="UniPathway" id="UPA00109">
    <property type="reaction ID" value="UER00187"/>
</dbReference>
<dbReference type="GO" id="GO:0009986">
    <property type="term" value="C:cell surface"/>
    <property type="evidence" value="ECO:0007669"/>
    <property type="project" value="UniProtKB-SubCell"/>
</dbReference>
<dbReference type="GO" id="GO:0005576">
    <property type="term" value="C:extracellular region"/>
    <property type="evidence" value="ECO:0007669"/>
    <property type="project" value="UniProtKB-SubCell"/>
</dbReference>
<dbReference type="GO" id="GO:0000015">
    <property type="term" value="C:phosphopyruvate hydratase complex"/>
    <property type="evidence" value="ECO:0007669"/>
    <property type="project" value="InterPro"/>
</dbReference>
<dbReference type="GO" id="GO:0000287">
    <property type="term" value="F:magnesium ion binding"/>
    <property type="evidence" value="ECO:0007669"/>
    <property type="project" value="UniProtKB-UniRule"/>
</dbReference>
<dbReference type="GO" id="GO:0004634">
    <property type="term" value="F:phosphopyruvate hydratase activity"/>
    <property type="evidence" value="ECO:0007669"/>
    <property type="project" value="UniProtKB-UniRule"/>
</dbReference>
<dbReference type="GO" id="GO:0006096">
    <property type="term" value="P:glycolytic process"/>
    <property type="evidence" value="ECO:0007669"/>
    <property type="project" value="UniProtKB-UniRule"/>
</dbReference>
<dbReference type="CDD" id="cd03313">
    <property type="entry name" value="enolase"/>
    <property type="match status" value="1"/>
</dbReference>
<dbReference type="FunFam" id="3.20.20.120:FF:000001">
    <property type="entry name" value="Enolase"/>
    <property type="match status" value="1"/>
</dbReference>
<dbReference type="FunFam" id="3.30.390.10:FF:000001">
    <property type="entry name" value="Enolase"/>
    <property type="match status" value="1"/>
</dbReference>
<dbReference type="Gene3D" id="3.20.20.120">
    <property type="entry name" value="Enolase-like C-terminal domain"/>
    <property type="match status" value="1"/>
</dbReference>
<dbReference type="Gene3D" id="3.30.390.10">
    <property type="entry name" value="Enolase-like, N-terminal domain"/>
    <property type="match status" value="1"/>
</dbReference>
<dbReference type="HAMAP" id="MF_00318">
    <property type="entry name" value="Enolase"/>
    <property type="match status" value="1"/>
</dbReference>
<dbReference type="InterPro" id="IPR000941">
    <property type="entry name" value="Enolase"/>
</dbReference>
<dbReference type="InterPro" id="IPR036849">
    <property type="entry name" value="Enolase-like_C_sf"/>
</dbReference>
<dbReference type="InterPro" id="IPR029017">
    <property type="entry name" value="Enolase-like_N"/>
</dbReference>
<dbReference type="InterPro" id="IPR020810">
    <property type="entry name" value="Enolase_C"/>
</dbReference>
<dbReference type="InterPro" id="IPR020809">
    <property type="entry name" value="Enolase_CS"/>
</dbReference>
<dbReference type="InterPro" id="IPR020811">
    <property type="entry name" value="Enolase_N"/>
</dbReference>
<dbReference type="NCBIfam" id="TIGR01060">
    <property type="entry name" value="eno"/>
    <property type="match status" value="1"/>
</dbReference>
<dbReference type="PANTHER" id="PTHR11902">
    <property type="entry name" value="ENOLASE"/>
    <property type="match status" value="1"/>
</dbReference>
<dbReference type="PANTHER" id="PTHR11902:SF1">
    <property type="entry name" value="ENOLASE"/>
    <property type="match status" value="1"/>
</dbReference>
<dbReference type="Pfam" id="PF00113">
    <property type="entry name" value="Enolase_C"/>
    <property type="match status" value="1"/>
</dbReference>
<dbReference type="Pfam" id="PF03952">
    <property type="entry name" value="Enolase_N"/>
    <property type="match status" value="1"/>
</dbReference>
<dbReference type="PIRSF" id="PIRSF001400">
    <property type="entry name" value="Enolase"/>
    <property type="match status" value="1"/>
</dbReference>
<dbReference type="PRINTS" id="PR00148">
    <property type="entry name" value="ENOLASE"/>
</dbReference>
<dbReference type="SFLD" id="SFLDF00002">
    <property type="entry name" value="enolase"/>
    <property type="match status" value="1"/>
</dbReference>
<dbReference type="SFLD" id="SFLDG00178">
    <property type="entry name" value="enolase"/>
    <property type="match status" value="1"/>
</dbReference>
<dbReference type="SMART" id="SM01192">
    <property type="entry name" value="Enolase_C"/>
    <property type="match status" value="1"/>
</dbReference>
<dbReference type="SMART" id="SM01193">
    <property type="entry name" value="Enolase_N"/>
    <property type="match status" value="1"/>
</dbReference>
<dbReference type="SUPFAM" id="SSF51604">
    <property type="entry name" value="Enolase C-terminal domain-like"/>
    <property type="match status" value="1"/>
</dbReference>
<dbReference type="SUPFAM" id="SSF54826">
    <property type="entry name" value="Enolase N-terminal domain-like"/>
    <property type="match status" value="1"/>
</dbReference>
<dbReference type="PROSITE" id="PS00164">
    <property type="entry name" value="ENOLASE"/>
    <property type="match status" value="1"/>
</dbReference>
<organism>
    <name type="scientific">Acinetobacter baumannii (strain AYE)</name>
    <dbReference type="NCBI Taxonomy" id="509173"/>
    <lineage>
        <taxon>Bacteria</taxon>
        <taxon>Pseudomonadati</taxon>
        <taxon>Pseudomonadota</taxon>
        <taxon>Gammaproteobacteria</taxon>
        <taxon>Moraxellales</taxon>
        <taxon>Moraxellaceae</taxon>
        <taxon>Acinetobacter</taxon>
        <taxon>Acinetobacter calcoaceticus/baumannii complex</taxon>
    </lineage>
</organism>
<reference key="1">
    <citation type="journal article" date="2008" name="PLoS ONE">
        <title>Comparative analysis of Acinetobacters: three genomes for three lifestyles.</title>
        <authorList>
            <person name="Vallenet D."/>
            <person name="Nordmann P."/>
            <person name="Barbe V."/>
            <person name="Poirel L."/>
            <person name="Mangenot S."/>
            <person name="Bataille E."/>
            <person name="Dossat C."/>
            <person name="Gas S."/>
            <person name="Kreimeyer A."/>
            <person name="Lenoble P."/>
            <person name="Oztas S."/>
            <person name="Poulain J."/>
            <person name="Segurens B."/>
            <person name="Robert C."/>
            <person name="Abergel C."/>
            <person name="Claverie J.-M."/>
            <person name="Raoult D."/>
            <person name="Medigue C."/>
            <person name="Weissenbach J."/>
            <person name="Cruveiller S."/>
        </authorList>
    </citation>
    <scope>NUCLEOTIDE SEQUENCE [LARGE SCALE GENOMIC DNA]</scope>
    <source>
        <strain>AYE</strain>
    </source>
</reference>
<sequence length="431" mass="46495">MFMSQIVDIRAREILDSRGNPTIEADVILESGVVGRACAPSGASTGSREALELRDGDKSRYLGKGVRTAVQNVNSSIHELLVGQSVFEQKALDEKMIAFDGTENKSKLGANATLAVSLAAAHAAAAEQKLPLFQYIANLRGQTTLTMPVPMMNILNGGAHADNTVDIQEFMIEPVGFTSFAEALRAGAEVFHSLKSVLKKQGLNTAVGDEGGFAPNLRSNEEAITVILQAIEQTGYKAGSDIMLALDCASSEFYKNGQYILEGEGNKSFTSNQFADYLAGLVKQYPIISIEDGLDESDWEGWSYLTSILGDKIQLVGDDLFVTNPKILQRGIDEKVGNSILIKYNQIGTLTETLDAIYLAKANGYTTVISHRSGETEDSTIADLAVGTAAGQIKTGSLCRSDRVSKYNQLLRIEELTKAVYRGKAEFKGLN</sequence>
<evidence type="ECO:0000255" key="1">
    <source>
        <dbReference type="HAMAP-Rule" id="MF_00318"/>
    </source>
</evidence>
<protein>
    <recommendedName>
        <fullName evidence="1">Enolase</fullName>
        <ecNumber evidence="1">4.2.1.11</ecNumber>
    </recommendedName>
    <alternativeName>
        <fullName evidence="1">2-phospho-D-glycerate hydro-lyase</fullName>
    </alternativeName>
    <alternativeName>
        <fullName evidence="1">2-phosphoglycerate dehydratase</fullName>
    </alternativeName>
</protein>
<feature type="chain" id="PRO_1000115819" description="Enolase">
    <location>
        <begin position="1"/>
        <end position="431"/>
    </location>
</feature>
<feature type="active site" description="Proton donor" evidence="1">
    <location>
        <position position="210"/>
    </location>
</feature>
<feature type="active site" description="Proton acceptor" evidence="1">
    <location>
        <position position="343"/>
    </location>
</feature>
<feature type="binding site" evidence="1">
    <location>
        <position position="168"/>
    </location>
    <ligand>
        <name>(2R)-2-phosphoglycerate</name>
        <dbReference type="ChEBI" id="CHEBI:58289"/>
    </ligand>
</feature>
<feature type="binding site" evidence="1">
    <location>
        <position position="247"/>
    </location>
    <ligand>
        <name>Mg(2+)</name>
        <dbReference type="ChEBI" id="CHEBI:18420"/>
    </ligand>
</feature>
<feature type="binding site" evidence="1">
    <location>
        <position position="291"/>
    </location>
    <ligand>
        <name>Mg(2+)</name>
        <dbReference type="ChEBI" id="CHEBI:18420"/>
    </ligand>
</feature>
<feature type="binding site" evidence="1">
    <location>
        <position position="318"/>
    </location>
    <ligand>
        <name>Mg(2+)</name>
        <dbReference type="ChEBI" id="CHEBI:18420"/>
    </ligand>
</feature>
<feature type="binding site" evidence="1">
    <location>
        <position position="343"/>
    </location>
    <ligand>
        <name>(2R)-2-phosphoglycerate</name>
        <dbReference type="ChEBI" id="CHEBI:58289"/>
    </ligand>
</feature>
<feature type="binding site" evidence="1">
    <location>
        <position position="372"/>
    </location>
    <ligand>
        <name>(2R)-2-phosphoglycerate</name>
        <dbReference type="ChEBI" id="CHEBI:58289"/>
    </ligand>
</feature>
<feature type="binding site" evidence="1">
    <location>
        <position position="373"/>
    </location>
    <ligand>
        <name>(2R)-2-phosphoglycerate</name>
        <dbReference type="ChEBI" id="CHEBI:58289"/>
    </ligand>
</feature>
<feature type="binding site" evidence="1">
    <location>
        <position position="394"/>
    </location>
    <ligand>
        <name>(2R)-2-phosphoglycerate</name>
        <dbReference type="ChEBI" id="CHEBI:58289"/>
    </ligand>
</feature>
<gene>
    <name evidence="1" type="primary">eno</name>
    <name type="ordered locus">ABAYE1669</name>
</gene>
<comment type="function">
    <text evidence="1">Catalyzes the reversible conversion of 2-phosphoglycerate (2-PG) into phosphoenolpyruvate (PEP). It is essential for the degradation of carbohydrates via glycolysis.</text>
</comment>
<comment type="catalytic activity">
    <reaction evidence="1">
        <text>(2R)-2-phosphoglycerate = phosphoenolpyruvate + H2O</text>
        <dbReference type="Rhea" id="RHEA:10164"/>
        <dbReference type="ChEBI" id="CHEBI:15377"/>
        <dbReference type="ChEBI" id="CHEBI:58289"/>
        <dbReference type="ChEBI" id="CHEBI:58702"/>
        <dbReference type="EC" id="4.2.1.11"/>
    </reaction>
</comment>
<comment type="cofactor">
    <cofactor evidence="1">
        <name>Mg(2+)</name>
        <dbReference type="ChEBI" id="CHEBI:18420"/>
    </cofactor>
    <text evidence="1">Binds a second Mg(2+) ion via substrate during catalysis.</text>
</comment>
<comment type="pathway">
    <text evidence="1">Carbohydrate degradation; glycolysis; pyruvate from D-glyceraldehyde 3-phosphate: step 4/5.</text>
</comment>
<comment type="subunit">
    <text evidence="1">Component of the RNA degradosome, a multiprotein complex involved in RNA processing and mRNA degradation.</text>
</comment>
<comment type="subcellular location">
    <subcellularLocation>
        <location evidence="1">Cytoplasm</location>
    </subcellularLocation>
    <subcellularLocation>
        <location evidence="1">Secreted</location>
    </subcellularLocation>
    <subcellularLocation>
        <location evidence="1">Cell surface</location>
    </subcellularLocation>
    <text evidence="1">Fractions of enolase are present in both the cytoplasm and on the cell surface.</text>
</comment>
<comment type="similarity">
    <text evidence="1">Belongs to the enolase family.</text>
</comment>
<keyword id="KW-0963">Cytoplasm</keyword>
<keyword id="KW-0324">Glycolysis</keyword>
<keyword id="KW-0456">Lyase</keyword>
<keyword id="KW-0460">Magnesium</keyword>
<keyword id="KW-0479">Metal-binding</keyword>
<keyword id="KW-0964">Secreted</keyword>
<proteinExistence type="inferred from homology"/>
<accession>B0V677</accession>
<name>ENO_ACIBY</name>